<proteinExistence type="inferred from homology"/>
<accession>A1WZR2</accession>
<reference key="1">
    <citation type="submission" date="2006-12" db="EMBL/GenBank/DDBJ databases">
        <title>Complete sequence of Halorhodospira halophila SL1.</title>
        <authorList>
            <consortium name="US DOE Joint Genome Institute"/>
            <person name="Copeland A."/>
            <person name="Lucas S."/>
            <person name="Lapidus A."/>
            <person name="Barry K."/>
            <person name="Detter J.C."/>
            <person name="Glavina del Rio T."/>
            <person name="Hammon N."/>
            <person name="Israni S."/>
            <person name="Dalin E."/>
            <person name="Tice H."/>
            <person name="Pitluck S."/>
            <person name="Saunders E."/>
            <person name="Brettin T."/>
            <person name="Bruce D."/>
            <person name="Han C."/>
            <person name="Tapia R."/>
            <person name="Schmutz J."/>
            <person name="Larimer F."/>
            <person name="Land M."/>
            <person name="Hauser L."/>
            <person name="Kyrpides N."/>
            <person name="Mikhailova N."/>
            <person name="Hoff W."/>
            <person name="Richardson P."/>
        </authorList>
    </citation>
    <scope>NUCLEOTIDE SEQUENCE [LARGE SCALE GENOMIC DNA]</scope>
    <source>
        <strain>DSM 244 / SL1</strain>
    </source>
</reference>
<sequence length="278" mass="31369">MREGWFTEAVEDEGVAFSLAIDERVHEEQSEYQHIEVYRTRRWGRLLVLDGCVMLTERDEFLYHEMMAHPALFAHREPRRVAIVGGGDCGILREVLRHPGVEHTLQVELDERVTRVAETHFPDLCTANDDERAELRFTDGLRWIREAEPESLDVVIVDSTDPVGPAAGLFTKEFLTDVRSALGPGGIVVQQSESPLLHRDSVIAPLHRAASEAGFDGVHTLTFPVPSYPSGWWSATLMVNGGDPRNFREADSEEKPFETRYYNADIHRAALAVPELLK</sequence>
<dbReference type="EC" id="2.5.1.16" evidence="1"/>
<dbReference type="EMBL" id="CP000544">
    <property type="protein sequence ID" value="ABM63174.1"/>
    <property type="molecule type" value="Genomic_DNA"/>
</dbReference>
<dbReference type="RefSeq" id="WP_011815196.1">
    <property type="nucleotide sequence ID" value="NC_008789.1"/>
</dbReference>
<dbReference type="SMR" id="A1WZR2"/>
<dbReference type="STRING" id="349124.Hhal_2411"/>
<dbReference type="KEGG" id="hha:Hhal_2411"/>
<dbReference type="eggNOG" id="COG0421">
    <property type="taxonomic scope" value="Bacteria"/>
</dbReference>
<dbReference type="HOGENOM" id="CLU_048199_3_1_6"/>
<dbReference type="OrthoDB" id="9793120at2"/>
<dbReference type="UniPathway" id="UPA00248">
    <property type="reaction ID" value="UER00314"/>
</dbReference>
<dbReference type="Proteomes" id="UP000000647">
    <property type="component" value="Chromosome"/>
</dbReference>
<dbReference type="GO" id="GO:0005829">
    <property type="term" value="C:cytosol"/>
    <property type="evidence" value="ECO:0007669"/>
    <property type="project" value="TreeGrafter"/>
</dbReference>
<dbReference type="GO" id="GO:0004766">
    <property type="term" value="F:spermidine synthase activity"/>
    <property type="evidence" value="ECO:0007669"/>
    <property type="project" value="UniProtKB-UniRule"/>
</dbReference>
<dbReference type="GO" id="GO:0008295">
    <property type="term" value="P:spermidine biosynthetic process"/>
    <property type="evidence" value="ECO:0007669"/>
    <property type="project" value="UniProtKB-UniRule"/>
</dbReference>
<dbReference type="CDD" id="cd02440">
    <property type="entry name" value="AdoMet_MTases"/>
    <property type="match status" value="1"/>
</dbReference>
<dbReference type="Gene3D" id="2.30.140.10">
    <property type="entry name" value="Spermidine synthase, tetramerisation domain"/>
    <property type="match status" value="1"/>
</dbReference>
<dbReference type="Gene3D" id="3.40.50.150">
    <property type="entry name" value="Vaccinia Virus protein VP39"/>
    <property type="match status" value="1"/>
</dbReference>
<dbReference type="HAMAP" id="MF_00198">
    <property type="entry name" value="Spermidine_synth"/>
    <property type="match status" value="1"/>
</dbReference>
<dbReference type="InterPro" id="IPR030374">
    <property type="entry name" value="PABS"/>
</dbReference>
<dbReference type="InterPro" id="IPR030373">
    <property type="entry name" value="PABS_CS"/>
</dbReference>
<dbReference type="InterPro" id="IPR029063">
    <property type="entry name" value="SAM-dependent_MTases_sf"/>
</dbReference>
<dbReference type="InterPro" id="IPR001045">
    <property type="entry name" value="Spermi_synthase"/>
</dbReference>
<dbReference type="InterPro" id="IPR035246">
    <property type="entry name" value="Spermidine_synt_N"/>
</dbReference>
<dbReference type="InterPro" id="IPR037163">
    <property type="entry name" value="Spermidine_synt_N_sf"/>
</dbReference>
<dbReference type="NCBIfam" id="NF002010">
    <property type="entry name" value="PRK00811.1"/>
    <property type="match status" value="1"/>
</dbReference>
<dbReference type="NCBIfam" id="TIGR00417">
    <property type="entry name" value="speE"/>
    <property type="match status" value="1"/>
</dbReference>
<dbReference type="PANTHER" id="PTHR11558:SF11">
    <property type="entry name" value="SPERMIDINE SYNTHASE"/>
    <property type="match status" value="1"/>
</dbReference>
<dbReference type="PANTHER" id="PTHR11558">
    <property type="entry name" value="SPERMIDINE/SPERMINE SYNTHASE"/>
    <property type="match status" value="1"/>
</dbReference>
<dbReference type="Pfam" id="PF17284">
    <property type="entry name" value="Spermine_synt_N"/>
    <property type="match status" value="1"/>
</dbReference>
<dbReference type="Pfam" id="PF01564">
    <property type="entry name" value="Spermine_synth"/>
    <property type="match status" value="1"/>
</dbReference>
<dbReference type="SUPFAM" id="SSF53335">
    <property type="entry name" value="S-adenosyl-L-methionine-dependent methyltransferases"/>
    <property type="match status" value="1"/>
</dbReference>
<dbReference type="PROSITE" id="PS01330">
    <property type="entry name" value="PABS_1"/>
    <property type="match status" value="1"/>
</dbReference>
<dbReference type="PROSITE" id="PS51006">
    <property type="entry name" value="PABS_2"/>
    <property type="match status" value="1"/>
</dbReference>
<evidence type="ECO:0000255" key="1">
    <source>
        <dbReference type="HAMAP-Rule" id="MF_00198"/>
    </source>
</evidence>
<feature type="chain" id="PRO_1000099284" description="Polyamine aminopropyltransferase">
    <location>
        <begin position="1"/>
        <end position="278"/>
    </location>
</feature>
<feature type="domain" description="PABS" evidence="1">
    <location>
        <begin position="3"/>
        <end position="240"/>
    </location>
</feature>
<feature type="active site" description="Proton acceptor" evidence="1">
    <location>
        <position position="158"/>
    </location>
</feature>
<feature type="binding site" evidence="1">
    <location>
        <position position="33"/>
    </location>
    <ligand>
        <name>S-methyl-5'-thioadenosine</name>
        <dbReference type="ChEBI" id="CHEBI:17509"/>
    </ligand>
</feature>
<feature type="binding site" evidence="1">
    <location>
        <position position="64"/>
    </location>
    <ligand>
        <name>spermidine</name>
        <dbReference type="ChEBI" id="CHEBI:57834"/>
    </ligand>
</feature>
<feature type="binding site" evidence="1">
    <location>
        <position position="88"/>
    </location>
    <ligand>
        <name>spermidine</name>
        <dbReference type="ChEBI" id="CHEBI:57834"/>
    </ligand>
</feature>
<feature type="binding site" evidence="1">
    <location>
        <position position="108"/>
    </location>
    <ligand>
        <name>S-methyl-5'-thioadenosine</name>
        <dbReference type="ChEBI" id="CHEBI:17509"/>
    </ligand>
</feature>
<feature type="binding site" evidence="1">
    <location>
        <begin position="139"/>
        <end position="140"/>
    </location>
    <ligand>
        <name>S-methyl-5'-thioadenosine</name>
        <dbReference type="ChEBI" id="CHEBI:17509"/>
    </ligand>
</feature>
<feature type="binding site" evidence="1">
    <location>
        <begin position="158"/>
        <end position="161"/>
    </location>
    <ligand>
        <name>spermidine</name>
        <dbReference type="ChEBI" id="CHEBI:57834"/>
    </ligand>
</feature>
<feature type="binding site" evidence="1">
    <location>
        <position position="165"/>
    </location>
    <ligand>
        <name>S-methyl-5'-thioadenosine</name>
        <dbReference type="ChEBI" id="CHEBI:17509"/>
    </ligand>
</feature>
<protein>
    <recommendedName>
        <fullName evidence="1">Polyamine aminopropyltransferase</fullName>
    </recommendedName>
    <alternativeName>
        <fullName evidence="1">Putrescine aminopropyltransferase</fullName>
        <shortName evidence="1">PAPT</shortName>
    </alternativeName>
    <alternativeName>
        <fullName evidence="1">Spermidine synthase</fullName>
        <shortName evidence="1">SPDS</shortName>
        <shortName evidence="1">SPDSY</shortName>
        <ecNumber evidence="1">2.5.1.16</ecNumber>
    </alternativeName>
</protein>
<name>SPEE_HALHL</name>
<gene>
    <name evidence="1" type="primary">speE</name>
    <name type="ordered locus">Hhal_2411</name>
</gene>
<organism>
    <name type="scientific">Halorhodospira halophila (strain DSM 244 / SL1)</name>
    <name type="common">Ectothiorhodospira halophila (strain DSM 244 / SL1)</name>
    <dbReference type="NCBI Taxonomy" id="349124"/>
    <lineage>
        <taxon>Bacteria</taxon>
        <taxon>Pseudomonadati</taxon>
        <taxon>Pseudomonadota</taxon>
        <taxon>Gammaproteobacteria</taxon>
        <taxon>Chromatiales</taxon>
        <taxon>Ectothiorhodospiraceae</taxon>
        <taxon>Halorhodospira</taxon>
    </lineage>
</organism>
<keyword id="KW-0963">Cytoplasm</keyword>
<keyword id="KW-0620">Polyamine biosynthesis</keyword>
<keyword id="KW-1185">Reference proteome</keyword>
<keyword id="KW-0745">Spermidine biosynthesis</keyword>
<keyword id="KW-0808">Transferase</keyword>
<comment type="function">
    <text evidence="1">Catalyzes the irreversible transfer of a propylamine group from the amino donor S-adenosylmethioninamine (decarboxy-AdoMet) to putrescine (1,4-diaminobutane) to yield spermidine.</text>
</comment>
<comment type="catalytic activity">
    <reaction evidence="1">
        <text>S-adenosyl 3-(methylsulfanyl)propylamine + putrescine = S-methyl-5'-thioadenosine + spermidine + H(+)</text>
        <dbReference type="Rhea" id="RHEA:12721"/>
        <dbReference type="ChEBI" id="CHEBI:15378"/>
        <dbReference type="ChEBI" id="CHEBI:17509"/>
        <dbReference type="ChEBI" id="CHEBI:57443"/>
        <dbReference type="ChEBI" id="CHEBI:57834"/>
        <dbReference type="ChEBI" id="CHEBI:326268"/>
        <dbReference type="EC" id="2.5.1.16"/>
    </reaction>
</comment>
<comment type="pathway">
    <text evidence="1">Amine and polyamine biosynthesis; spermidine biosynthesis; spermidine from putrescine: step 1/1.</text>
</comment>
<comment type="subunit">
    <text evidence="1">Homodimer or homotetramer.</text>
</comment>
<comment type="subcellular location">
    <subcellularLocation>
        <location evidence="1">Cytoplasm</location>
    </subcellularLocation>
</comment>
<comment type="similarity">
    <text evidence="1">Belongs to the spermidine/spermine synthase family.</text>
</comment>